<keyword id="KW-0012">Acyltransferase</keyword>
<keyword id="KW-0028">Amino-acid biosynthesis</keyword>
<keyword id="KW-0963">Cytoplasm</keyword>
<keyword id="KW-0220">Diaminopimelate biosynthesis</keyword>
<keyword id="KW-0457">Lysine biosynthesis</keyword>
<keyword id="KW-1185">Reference proteome</keyword>
<keyword id="KW-0677">Repeat</keyword>
<keyword id="KW-0808">Transferase</keyword>
<name>DAPD_LEPCP</name>
<accession>B1Y6E5</accession>
<proteinExistence type="inferred from homology"/>
<protein>
    <recommendedName>
        <fullName evidence="1">2,3,4,5-tetrahydropyridine-2,6-dicarboxylate N-succinyltransferase</fullName>
        <ecNumber evidence="1">2.3.1.117</ecNumber>
    </recommendedName>
    <alternativeName>
        <fullName evidence="1">Tetrahydrodipicolinate N-succinyltransferase</fullName>
        <shortName evidence="1">THP succinyltransferase</shortName>
        <shortName evidence="1">Tetrahydropicolinate succinylase</shortName>
    </alternativeName>
</protein>
<organism>
    <name type="scientific">Leptothrix cholodnii (strain ATCC 51168 / LMG 8142 / SP-6)</name>
    <name type="common">Leptothrix discophora (strain SP-6)</name>
    <dbReference type="NCBI Taxonomy" id="395495"/>
    <lineage>
        <taxon>Bacteria</taxon>
        <taxon>Pseudomonadati</taxon>
        <taxon>Pseudomonadota</taxon>
        <taxon>Betaproteobacteria</taxon>
        <taxon>Burkholderiales</taxon>
        <taxon>Sphaerotilaceae</taxon>
        <taxon>Leptothrix</taxon>
    </lineage>
</organism>
<sequence length="274" mass="28966">MSSQLQQVIEAAWEDRANLSVASAPAAVREAVAHVLGELDAGRIRVAERQAVGQWQVNQWVKKAVLLSFRLNDNVVMGDGALTFFDKVPSKFGGMDEAALRATGVRVVPPAVARRGSFIARGAILMPSYVNIGAYVDEGTMVDTWATVGSCAQIGKNVHLSGGVGIGGVLEPLQAGPTIIEDNCFIGARSEVVEGVVVEENSVISMGVYIGQSTKIYDRATGEVTYGRIPSGSVVVSGNLPSADGKYSLYCAVIVKRVDAQTRAKTSINDLLRG</sequence>
<feature type="chain" id="PRO_1000134052" description="2,3,4,5-tetrahydropyridine-2,6-dicarboxylate N-succinyltransferase">
    <location>
        <begin position="1"/>
        <end position="274"/>
    </location>
</feature>
<evidence type="ECO:0000255" key="1">
    <source>
        <dbReference type="HAMAP-Rule" id="MF_00811"/>
    </source>
</evidence>
<comment type="catalytic activity">
    <reaction evidence="1">
        <text>(S)-2,3,4,5-tetrahydrodipicolinate + succinyl-CoA + H2O = (S)-2-succinylamino-6-oxoheptanedioate + CoA</text>
        <dbReference type="Rhea" id="RHEA:17325"/>
        <dbReference type="ChEBI" id="CHEBI:15377"/>
        <dbReference type="ChEBI" id="CHEBI:15685"/>
        <dbReference type="ChEBI" id="CHEBI:16845"/>
        <dbReference type="ChEBI" id="CHEBI:57287"/>
        <dbReference type="ChEBI" id="CHEBI:57292"/>
        <dbReference type="EC" id="2.3.1.117"/>
    </reaction>
</comment>
<comment type="pathway">
    <text evidence="1">Amino-acid biosynthesis; L-lysine biosynthesis via DAP pathway; LL-2,6-diaminopimelate from (S)-tetrahydrodipicolinate (succinylase route): step 1/3.</text>
</comment>
<comment type="subcellular location">
    <subcellularLocation>
        <location evidence="1">Cytoplasm</location>
    </subcellularLocation>
</comment>
<comment type="similarity">
    <text evidence="1">Belongs to the transferase hexapeptide repeat family.</text>
</comment>
<reference key="1">
    <citation type="submission" date="2008-03" db="EMBL/GenBank/DDBJ databases">
        <title>Complete sequence of Leptothrix cholodnii SP-6.</title>
        <authorList>
            <consortium name="US DOE Joint Genome Institute"/>
            <person name="Copeland A."/>
            <person name="Lucas S."/>
            <person name="Lapidus A."/>
            <person name="Glavina del Rio T."/>
            <person name="Dalin E."/>
            <person name="Tice H."/>
            <person name="Bruce D."/>
            <person name="Goodwin L."/>
            <person name="Pitluck S."/>
            <person name="Chertkov O."/>
            <person name="Brettin T."/>
            <person name="Detter J.C."/>
            <person name="Han C."/>
            <person name="Kuske C.R."/>
            <person name="Schmutz J."/>
            <person name="Larimer F."/>
            <person name="Land M."/>
            <person name="Hauser L."/>
            <person name="Kyrpides N."/>
            <person name="Lykidis A."/>
            <person name="Emerson D."/>
            <person name="Richardson P."/>
        </authorList>
    </citation>
    <scope>NUCLEOTIDE SEQUENCE [LARGE SCALE GENOMIC DNA]</scope>
    <source>
        <strain>ATCC 51168 / LMG 8142 / SP-6</strain>
    </source>
</reference>
<gene>
    <name evidence="1" type="primary">dapD</name>
    <name type="ordered locus">Lcho_2516</name>
</gene>
<dbReference type="EC" id="2.3.1.117" evidence="1"/>
<dbReference type="EMBL" id="CP001013">
    <property type="protein sequence ID" value="ACB34781.1"/>
    <property type="molecule type" value="Genomic_DNA"/>
</dbReference>
<dbReference type="RefSeq" id="WP_012347537.1">
    <property type="nucleotide sequence ID" value="NC_010524.1"/>
</dbReference>
<dbReference type="SMR" id="B1Y6E5"/>
<dbReference type="STRING" id="395495.Lcho_2516"/>
<dbReference type="KEGG" id="lch:Lcho_2516"/>
<dbReference type="eggNOG" id="COG2171">
    <property type="taxonomic scope" value="Bacteria"/>
</dbReference>
<dbReference type="HOGENOM" id="CLU_050859_0_1_4"/>
<dbReference type="OrthoDB" id="9775362at2"/>
<dbReference type="UniPathway" id="UPA00034">
    <property type="reaction ID" value="UER00019"/>
</dbReference>
<dbReference type="Proteomes" id="UP000001693">
    <property type="component" value="Chromosome"/>
</dbReference>
<dbReference type="GO" id="GO:0005737">
    <property type="term" value="C:cytoplasm"/>
    <property type="evidence" value="ECO:0007669"/>
    <property type="project" value="UniProtKB-SubCell"/>
</dbReference>
<dbReference type="GO" id="GO:0008666">
    <property type="term" value="F:2,3,4,5-tetrahydropyridine-2,6-dicarboxylate N-succinyltransferase activity"/>
    <property type="evidence" value="ECO:0007669"/>
    <property type="project" value="UniProtKB-UniRule"/>
</dbReference>
<dbReference type="GO" id="GO:0016779">
    <property type="term" value="F:nucleotidyltransferase activity"/>
    <property type="evidence" value="ECO:0007669"/>
    <property type="project" value="TreeGrafter"/>
</dbReference>
<dbReference type="GO" id="GO:0019877">
    <property type="term" value="P:diaminopimelate biosynthetic process"/>
    <property type="evidence" value="ECO:0007669"/>
    <property type="project" value="UniProtKB-UniRule"/>
</dbReference>
<dbReference type="GO" id="GO:0009089">
    <property type="term" value="P:lysine biosynthetic process via diaminopimelate"/>
    <property type="evidence" value="ECO:0007669"/>
    <property type="project" value="UniProtKB-UniRule"/>
</dbReference>
<dbReference type="CDD" id="cd03350">
    <property type="entry name" value="LbH_THP_succinylT"/>
    <property type="match status" value="1"/>
</dbReference>
<dbReference type="Gene3D" id="2.160.10.10">
    <property type="entry name" value="Hexapeptide repeat proteins"/>
    <property type="match status" value="1"/>
</dbReference>
<dbReference type="Gene3D" id="1.10.166.10">
    <property type="entry name" value="Tetrahydrodipicolinate-N-succinyltransferase, N-terminal domain"/>
    <property type="match status" value="1"/>
</dbReference>
<dbReference type="HAMAP" id="MF_00811">
    <property type="entry name" value="DapD"/>
    <property type="match status" value="1"/>
</dbReference>
<dbReference type="InterPro" id="IPR005664">
    <property type="entry name" value="DapD_Trfase_Hexpep_rpt_fam"/>
</dbReference>
<dbReference type="InterPro" id="IPR001451">
    <property type="entry name" value="Hexapep"/>
</dbReference>
<dbReference type="InterPro" id="IPR018357">
    <property type="entry name" value="Hexapep_transf_CS"/>
</dbReference>
<dbReference type="InterPro" id="IPR023180">
    <property type="entry name" value="THP_succinylTrfase_dom1"/>
</dbReference>
<dbReference type="InterPro" id="IPR037133">
    <property type="entry name" value="THP_succinylTrfase_N_sf"/>
</dbReference>
<dbReference type="InterPro" id="IPR011004">
    <property type="entry name" value="Trimer_LpxA-like_sf"/>
</dbReference>
<dbReference type="NCBIfam" id="TIGR00965">
    <property type="entry name" value="dapD"/>
    <property type="match status" value="1"/>
</dbReference>
<dbReference type="NCBIfam" id="NF008808">
    <property type="entry name" value="PRK11830.1"/>
    <property type="match status" value="1"/>
</dbReference>
<dbReference type="PANTHER" id="PTHR19136:SF52">
    <property type="entry name" value="2,3,4,5-TETRAHYDROPYRIDINE-2,6-DICARBOXYLATE N-SUCCINYLTRANSFERASE"/>
    <property type="match status" value="1"/>
</dbReference>
<dbReference type="PANTHER" id="PTHR19136">
    <property type="entry name" value="MOLYBDENUM COFACTOR GUANYLYLTRANSFERASE"/>
    <property type="match status" value="1"/>
</dbReference>
<dbReference type="Pfam" id="PF14602">
    <property type="entry name" value="Hexapep_2"/>
    <property type="match status" value="1"/>
</dbReference>
<dbReference type="Pfam" id="PF14805">
    <property type="entry name" value="THDPS_N_2"/>
    <property type="match status" value="1"/>
</dbReference>
<dbReference type="SUPFAM" id="SSF51161">
    <property type="entry name" value="Trimeric LpxA-like enzymes"/>
    <property type="match status" value="1"/>
</dbReference>
<dbReference type="PROSITE" id="PS00101">
    <property type="entry name" value="HEXAPEP_TRANSFERASES"/>
    <property type="match status" value="1"/>
</dbReference>